<gene>
    <name evidence="1" type="primary">ispH</name>
    <name type="synonym">lytB</name>
    <name type="ordered locus">PD_1435</name>
</gene>
<accession>P65194</accession>
<accession>Q9PAS9</accession>
<organism>
    <name type="scientific">Xylella fastidiosa (strain Temecula1 / ATCC 700964)</name>
    <dbReference type="NCBI Taxonomy" id="183190"/>
    <lineage>
        <taxon>Bacteria</taxon>
        <taxon>Pseudomonadati</taxon>
        <taxon>Pseudomonadota</taxon>
        <taxon>Gammaproteobacteria</taxon>
        <taxon>Lysobacterales</taxon>
        <taxon>Lysobacteraceae</taxon>
        <taxon>Xylella</taxon>
    </lineage>
</organism>
<sequence>MKVLLANPRGFCAGVDRAIEIVKRTIDMLGTPIYVRHEVVHNRFVVDDLKQRGAIFVEELHQVPDGATVIFSAHGVSQAVRRQAAQRGLKVFDATCPLVTKVHLDVARHCRTGRDMILIGHAGHPEVEGTMGQWDQERGTGRIYLVENIDDVATLHVAQPHHLAYTTQTTLSVDDTRNIIDALRQRFPTIQGPKNNDICYATQNRQDAVRELARECDLVLVVGSPNSSNSNRLSELAQREGVASYLIDSAAEIDPAWVIDKHHIGVTAGASAPQVLVDGVLARLYELGATSVSEHSGKPESMVFALPKALRLQLVD</sequence>
<reference key="1">
    <citation type="journal article" date="2003" name="J. Bacteriol.">
        <title>Comparative analyses of the complete genome sequences of Pierce's disease and citrus variegated chlorosis strains of Xylella fastidiosa.</title>
        <authorList>
            <person name="Van Sluys M.A."/>
            <person name="de Oliveira M.C."/>
            <person name="Monteiro-Vitorello C.B."/>
            <person name="Miyaki C.Y."/>
            <person name="Furlan L.R."/>
            <person name="Camargo L.E.A."/>
            <person name="da Silva A.C.R."/>
            <person name="Moon D.H."/>
            <person name="Takita M.A."/>
            <person name="Lemos E.G.M."/>
            <person name="Machado M.A."/>
            <person name="Ferro M.I.T."/>
            <person name="da Silva F.R."/>
            <person name="Goldman M.H.S."/>
            <person name="Goldman G.H."/>
            <person name="Lemos M.V.F."/>
            <person name="El-Dorry H."/>
            <person name="Tsai S.M."/>
            <person name="Carrer H."/>
            <person name="Carraro D.M."/>
            <person name="de Oliveira R.C."/>
            <person name="Nunes L.R."/>
            <person name="Siqueira W.J."/>
            <person name="Coutinho L.L."/>
            <person name="Kimura E.T."/>
            <person name="Ferro E.S."/>
            <person name="Harakava R."/>
            <person name="Kuramae E.E."/>
            <person name="Marino C.L."/>
            <person name="Giglioti E."/>
            <person name="Abreu I.L."/>
            <person name="Alves L.M.C."/>
            <person name="do Amaral A.M."/>
            <person name="Baia G.S."/>
            <person name="Blanco S.R."/>
            <person name="Brito M.S."/>
            <person name="Cannavan F.S."/>
            <person name="Celestino A.V."/>
            <person name="da Cunha A.F."/>
            <person name="Fenille R.C."/>
            <person name="Ferro J.A."/>
            <person name="Formighieri E.F."/>
            <person name="Kishi L.T."/>
            <person name="Leoni S.G."/>
            <person name="Oliveira A.R."/>
            <person name="Rosa V.E. Jr."/>
            <person name="Sassaki F.T."/>
            <person name="Sena J.A.D."/>
            <person name="de Souza A.A."/>
            <person name="Truffi D."/>
            <person name="Tsukumo F."/>
            <person name="Yanai G.M."/>
            <person name="Zaros L.G."/>
            <person name="Civerolo E.L."/>
            <person name="Simpson A.J.G."/>
            <person name="Almeida N.F. Jr."/>
            <person name="Setubal J.C."/>
            <person name="Kitajima J.P."/>
        </authorList>
    </citation>
    <scope>NUCLEOTIDE SEQUENCE [LARGE SCALE GENOMIC DNA]</scope>
    <source>
        <strain>Temecula1 / ATCC 700964</strain>
    </source>
</reference>
<comment type="function">
    <text evidence="1">Catalyzes the conversion of 1-hydroxy-2-methyl-2-(E)-butenyl 4-diphosphate (HMBPP) into a mixture of isopentenyl diphosphate (IPP) and dimethylallyl diphosphate (DMAPP). Acts in the terminal step of the DOXP/MEP pathway for isoprenoid precursor biosynthesis.</text>
</comment>
<comment type="catalytic activity">
    <reaction evidence="1">
        <text>isopentenyl diphosphate + 2 oxidized [2Fe-2S]-[ferredoxin] + H2O = (2E)-4-hydroxy-3-methylbut-2-enyl diphosphate + 2 reduced [2Fe-2S]-[ferredoxin] + 2 H(+)</text>
        <dbReference type="Rhea" id="RHEA:24488"/>
        <dbReference type="Rhea" id="RHEA-COMP:10000"/>
        <dbReference type="Rhea" id="RHEA-COMP:10001"/>
        <dbReference type="ChEBI" id="CHEBI:15377"/>
        <dbReference type="ChEBI" id="CHEBI:15378"/>
        <dbReference type="ChEBI" id="CHEBI:33737"/>
        <dbReference type="ChEBI" id="CHEBI:33738"/>
        <dbReference type="ChEBI" id="CHEBI:128753"/>
        <dbReference type="ChEBI" id="CHEBI:128769"/>
        <dbReference type="EC" id="1.17.7.4"/>
    </reaction>
</comment>
<comment type="catalytic activity">
    <reaction evidence="1">
        <text>dimethylallyl diphosphate + 2 oxidized [2Fe-2S]-[ferredoxin] + H2O = (2E)-4-hydroxy-3-methylbut-2-enyl diphosphate + 2 reduced [2Fe-2S]-[ferredoxin] + 2 H(+)</text>
        <dbReference type="Rhea" id="RHEA:24825"/>
        <dbReference type="Rhea" id="RHEA-COMP:10000"/>
        <dbReference type="Rhea" id="RHEA-COMP:10001"/>
        <dbReference type="ChEBI" id="CHEBI:15377"/>
        <dbReference type="ChEBI" id="CHEBI:15378"/>
        <dbReference type="ChEBI" id="CHEBI:33737"/>
        <dbReference type="ChEBI" id="CHEBI:33738"/>
        <dbReference type="ChEBI" id="CHEBI:57623"/>
        <dbReference type="ChEBI" id="CHEBI:128753"/>
        <dbReference type="EC" id="1.17.7.4"/>
    </reaction>
</comment>
<comment type="cofactor">
    <cofactor evidence="1">
        <name>[4Fe-4S] cluster</name>
        <dbReference type="ChEBI" id="CHEBI:49883"/>
    </cofactor>
    <text evidence="1">Binds 1 [4Fe-4S] cluster per subunit.</text>
</comment>
<comment type="pathway">
    <text evidence="1">Isoprenoid biosynthesis; dimethylallyl diphosphate biosynthesis; dimethylallyl diphosphate from (2E)-4-hydroxy-3-methylbutenyl diphosphate: step 1/1.</text>
</comment>
<comment type="pathway">
    <text evidence="1">Isoprenoid biosynthesis; isopentenyl diphosphate biosynthesis via DXP pathway; isopentenyl diphosphate from 1-deoxy-D-xylulose 5-phosphate: step 6/6.</text>
</comment>
<comment type="similarity">
    <text evidence="1">Belongs to the IspH family.</text>
</comment>
<feature type="chain" id="PRO_0000128902" description="4-hydroxy-3-methylbut-2-enyl diphosphate reductase">
    <location>
        <begin position="1"/>
        <end position="316"/>
    </location>
</feature>
<feature type="active site" description="Proton donor" evidence="1">
    <location>
        <position position="126"/>
    </location>
</feature>
<feature type="binding site" evidence="1">
    <location>
        <position position="12"/>
    </location>
    <ligand>
        <name>[4Fe-4S] cluster</name>
        <dbReference type="ChEBI" id="CHEBI:49883"/>
    </ligand>
</feature>
<feature type="binding site" evidence="1">
    <location>
        <position position="41"/>
    </location>
    <ligand>
        <name>(2E)-4-hydroxy-3-methylbut-2-enyl diphosphate</name>
        <dbReference type="ChEBI" id="CHEBI:128753"/>
    </ligand>
</feature>
<feature type="binding site" evidence="1">
    <location>
        <position position="41"/>
    </location>
    <ligand>
        <name>dimethylallyl diphosphate</name>
        <dbReference type="ChEBI" id="CHEBI:57623"/>
    </ligand>
</feature>
<feature type="binding site" evidence="1">
    <location>
        <position position="41"/>
    </location>
    <ligand>
        <name>isopentenyl diphosphate</name>
        <dbReference type="ChEBI" id="CHEBI:128769"/>
    </ligand>
</feature>
<feature type="binding site" evidence="1">
    <location>
        <position position="74"/>
    </location>
    <ligand>
        <name>(2E)-4-hydroxy-3-methylbut-2-enyl diphosphate</name>
        <dbReference type="ChEBI" id="CHEBI:128753"/>
    </ligand>
</feature>
<feature type="binding site" evidence="1">
    <location>
        <position position="74"/>
    </location>
    <ligand>
        <name>dimethylallyl diphosphate</name>
        <dbReference type="ChEBI" id="CHEBI:57623"/>
    </ligand>
</feature>
<feature type="binding site" evidence="1">
    <location>
        <position position="74"/>
    </location>
    <ligand>
        <name>isopentenyl diphosphate</name>
        <dbReference type="ChEBI" id="CHEBI:128769"/>
    </ligand>
</feature>
<feature type="binding site" evidence="1">
    <location>
        <position position="96"/>
    </location>
    <ligand>
        <name>[4Fe-4S] cluster</name>
        <dbReference type="ChEBI" id="CHEBI:49883"/>
    </ligand>
</feature>
<feature type="binding site" evidence="1">
    <location>
        <position position="124"/>
    </location>
    <ligand>
        <name>(2E)-4-hydroxy-3-methylbut-2-enyl diphosphate</name>
        <dbReference type="ChEBI" id="CHEBI:128753"/>
    </ligand>
</feature>
<feature type="binding site" evidence="1">
    <location>
        <position position="124"/>
    </location>
    <ligand>
        <name>dimethylallyl diphosphate</name>
        <dbReference type="ChEBI" id="CHEBI:57623"/>
    </ligand>
</feature>
<feature type="binding site" evidence="1">
    <location>
        <position position="124"/>
    </location>
    <ligand>
        <name>isopentenyl diphosphate</name>
        <dbReference type="ChEBI" id="CHEBI:128769"/>
    </ligand>
</feature>
<feature type="binding site" evidence="1">
    <location>
        <position position="169"/>
    </location>
    <ligand>
        <name>(2E)-4-hydroxy-3-methylbut-2-enyl diphosphate</name>
        <dbReference type="ChEBI" id="CHEBI:128753"/>
    </ligand>
</feature>
<feature type="binding site" evidence="1">
    <location>
        <position position="199"/>
    </location>
    <ligand>
        <name>[4Fe-4S] cluster</name>
        <dbReference type="ChEBI" id="CHEBI:49883"/>
    </ligand>
</feature>
<feature type="binding site" evidence="1">
    <location>
        <position position="227"/>
    </location>
    <ligand>
        <name>(2E)-4-hydroxy-3-methylbut-2-enyl diphosphate</name>
        <dbReference type="ChEBI" id="CHEBI:128753"/>
    </ligand>
</feature>
<feature type="binding site" evidence="1">
    <location>
        <position position="227"/>
    </location>
    <ligand>
        <name>dimethylallyl diphosphate</name>
        <dbReference type="ChEBI" id="CHEBI:57623"/>
    </ligand>
</feature>
<feature type="binding site" evidence="1">
    <location>
        <position position="227"/>
    </location>
    <ligand>
        <name>isopentenyl diphosphate</name>
        <dbReference type="ChEBI" id="CHEBI:128769"/>
    </ligand>
</feature>
<feature type="binding site" evidence="1">
    <location>
        <position position="228"/>
    </location>
    <ligand>
        <name>(2E)-4-hydroxy-3-methylbut-2-enyl diphosphate</name>
        <dbReference type="ChEBI" id="CHEBI:128753"/>
    </ligand>
</feature>
<feature type="binding site" evidence="1">
    <location>
        <position position="228"/>
    </location>
    <ligand>
        <name>dimethylallyl diphosphate</name>
        <dbReference type="ChEBI" id="CHEBI:57623"/>
    </ligand>
</feature>
<feature type="binding site" evidence="1">
    <location>
        <position position="228"/>
    </location>
    <ligand>
        <name>isopentenyl diphosphate</name>
        <dbReference type="ChEBI" id="CHEBI:128769"/>
    </ligand>
</feature>
<feature type="binding site" evidence="1">
    <location>
        <position position="229"/>
    </location>
    <ligand>
        <name>(2E)-4-hydroxy-3-methylbut-2-enyl diphosphate</name>
        <dbReference type="ChEBI" id="CHEBI:128753"/>
    </ligand>
</feature>
<feature type="binding site" evidence="1">
    <location>
        <position position="229"/>
    </location>
    <ligand>
        <name>dimethylallyl diphosphate</name>
        <dbReference type="ChEBI" id="CHEBI:57623"/>
    </ligand>
</feature>
<feature type="binding site" evidence="1">
    <location>
        <position position="229"/>
    </location>
    <ligand>
        <name>isopentenyl diphosphate</name>
        <dbReference type="ChEBI" id="CHEBI:128769"/>
    </ligand>
</feature>
<feature type="binding site" evidence="1">
    <location>
        <position position="271"/>
    </location>
    <ligand>
        <name>(2E)-4-hydroxy-3-methylbut-2-enyl diphosphate</name>
        <dbReference type="ChEBI" id="CHEBI:128753"/>
    </ligand>
</feature>
<feature type="binding site" evidence="1">
    <location>
        <position position="271"/>
    </location>
    <ligand>
        <name>dimethylallyl diphosphate</name>
        <dbReference type="ChEBI" id="CHEBI:57623"/>
    </ligand>
</feature>
<feature type="binding site" evidence="1">
    <location>
        <position position="271"/>
    </location>
    <ligand>
        <name>isopentenyl diphosphate</name>
        <dbReference type="ChEBI" id="CHEBI:128769"/>
    </ligand>
</feature>
<protein>
    <recommendedName>
        <fullName evidence="1">4-hydroxy-3-methylbut-2-enyl diphosphate reductase</fullName>
        <shortName evidence="1">HMBPP reductase</shortName>
        <ecNumber evidence="1">1.17.7.4</ecNumber>
    </recommendedName>
</protein>
<name>ISPH_XYLFT</name>
<evidence type="ECO:0000255" key="1">
    <source>
        <dbReference type="HAMAP-Rule" id="MF_00191"/>
    </source>
</evidence>
<dbReference type="EC" id="1.17.7.4" evidence="1"/>
<dbReference type="EMBL" id="AE009442">
    <property type="protein sequence ID" value="AAO29279.1"/>
    <property type="molecule type" value="Genomic_DNA"/>
</dbReference>
<dbReference type="RefSeq" id="WP_004088396.1">
    <property type="nucleotide sequence ID" value="NC_004556.1"/>
</dbReference>
<dbReference type="SMR" id="P65194"/>
<dbReference type="GeneID" id="93905256"/>
<dbReference type="KEGG" id="xft:PD_1435"/>
<dbReference type="HOGENOM" id="CLU_027486_1_0_6"/>
<dbReference type="UniPathway" id="UPA00056">
    <property type="reaction ID" value="UER00097"/>
</dbReference>
<dbReference type="UniPathway" id="UPA00059">
    <property type="reaction ID" value="UER00105"/>
</dbReference>
<dbReference type="Proteomes" id="UP000002516">
    <property type="component" value="Chromosome"/>
</dbReference>
<dbReference type="GO" id="GO:0051539">
    <property type="term" value="F:4 iron, 4 sulfur cluster binding"/>
    <property type="evidence" value="ECO:0007669"/>
    <property type="project" value="UniProtKB-UniRule"/>
</dbReference>
<dbReference type="GO" id="GO:0051745">
    <property type="term" value="F:4-hydroxy-3-methylbut-2-enyl diphosphate reductase activity"/>
    <property type="evidence" value="ECO:0007669"/>
    <property type="project" value="UniProtKB-UniRule"/>
</dbReference>
<dbReference type="GO" id="GO:0046872">
    <property type="term" value="F:metal ion binding"/>
    <property type="evidence" value="ECO:0007669"/>
    <property type="project" value="UniProtKB-KW"/>
</dbReference>
<dbReference type="GO" id="GO:0050992">
    <property type="term" value="P:dimethylallyl diphosphate biosynthetic process"/>
    <property type="evidence" value="ECO:0007669"/>
    <property type="project" value="UniProtKB-UniRule"/>
</dbReference>
<dbReference type="GO" id="GO:0019288">
    <property type="term" value="P:isopentenyl diphosphate biosynthetic process, methylerythritol 4-phosphate pathway"/>
    <property type="evidence" value="ECO:0007669"/>
    <property type="project" value="UniProtKB-UniRule"/>
</dbReference>
<dbReference type="GO" id="GO:0016114">
    <property type="term" value="P:terpenoid biosynthetic process"/>
    <property type="evidence" value="ECO:0007669"/>
    <property type="project" value="UniProtKB-UniRule"/>
</dbReference>
<dbReference type="CDD" id="cd13944">
    <property type="entry name" value="lytB_ispH"/>
    <property type="match status" value="1"/>
</dbReference>
<dbReference type="Gene3D" id="3.40.50.11270">
    <property type="match status" value="1"/>
</dbReference>
<dbReference type="Gene3D" id="3.40.1010.20">
    <property type="entry name" value="4-hydroxy-3-methylbut-2-enyl diphosphate reductase, catalytic domain"/>
    <property type="match status" value="2"/>
</dbReference>
<dbReference type="HAMAP" id="MF_00191">
    <property type="entry name" value="IspH"/>
    <property type="match status" value="1"/>
</dbReference>
<dbReference type="InterPro" id="IPR003451">
    <property type="entry name" value="LytB/IspH"/>
</dbReference>
<dbReference type="NCBIfam" id="TIGR00216">
    <property type="entry name" value="ispH_lytB"/>
    <property type="match status" value="1"/>
</dbReference>
<dbReference type="NCBIfam" id="NF002188">
    <property type="entry name" value="PRK01045.1-2"/>
    <property type="match status" value="1"/>
</dbReference>
<dbReference type="NCBIfam" id="NF002190">
    <property type="entry name" value="PRK01045.1-4"/>
    <property type="match status" value="1"/>
</dbReference>
<dbReference type="PANTHER" id="PTHR30426">
    <property type="entry name" value="4-HYDROXY-3-METHYLBUT-2-ENYL DIPHOSPHATE REDUCTASE"/>
    <property type="match status" value="1"/>
</dbReference>
<dbReference type="PANTHER" id="PTHR30426:SF0">
    <property type="entry name" value="4-HYDROXY-3-METHYLBUT-2-ENYL DIPHOSPHATE REDUCTASE"/>
    <property type="match status" value="1"/>
</dbReference>
<dbReference type="Pfam" id="PF02401">
    <property type="entry name" value="LYTB"/>
    <property type="match status" value="1"/>
</dbReference>
<proteinExistence type="inferred from homology"/>
<keyword id="KW-0004">4Fe-4S</keyword>
<keyword id="KW-0408">Iron</keyword>
<keyword id="KW-0411">Iron-sulfur</keyword>
<keyword id="KW-0414">Isoprene biosynthesis</keyword>
<keyword id="KW-0479">Metal-binding</keyword>
<keyword id="KW-0560">Oxidoreductase</keyword>
<keyword id="KW-1185">Reference proteome</keyword>